<evidence type="ECO:0000255" key="1"/>
<evidence type="ECO:0000269" key="2">
    <source>
    </source>
</evidence>
<name>YFAZ_ECOLI</name>
<keyword id="KW-0998">Cell outer membrane</keyword>
<keyword id="KW-0472">Membrane</keyword>
<keyword id="KW-1185">Reference proteome</keyword>
<keyword id="KW-0732">Signal</keyword>
<comment type="subcellular location">
    <subcellularLocation>
        <location evidence="2">Cell outer membrane</location>
    </subcellularLocation>
</comment>
<feature type="signal peptide" evidence="1">
    <location>
        <begin position="1"/>
        <end position="21"/>
    </location>
</feature>
<feature type="chain" id="PRO_0000013878" description="Outer membrane protein YfaZ">
    <location>
        <begin position="22"/>
        <end position="180"/>
    </location>
</feature>
<accession>P76471</accession>
<accession>Q2MAN4</accession>
<protein>
    <recommendedName>
        <fullName>Outer membrane protein YfaZ</fullName>
    </recommendedName>
</protein>
<dbReference type="EMBL" id="U00096">
    <property type="protein sequence ID" value="AAC75310.2"/>
    <property type="molecule type" value="Genomic_DNA"/>
</dbReference>
<dbReference type="EMBL" id="AP009048">
    <property type="protein sequence ID" value="BAE76672.1"/>
    <property type="molecule type" value="Genomic_DNA"/>
</dbReference>
<dbReference type="PIR" id="H64995">
    <property type="entry name" value="H64995"/>
</dbReference>
<dbReference type="RefSeq" id="NP_416753.4">
    <property type="nucleotide sequence ID" value="NC_000913.3"/>
</dbReference>
<dbReference type="RefSeq" id="WP_001300392.1">
    <property type="nucleotide sequence ID" value="NZ_LN832404.1"/>
</dbReference>
<dbReference type="BioGRID" id="4261214">
    <property type="interactions" value="181"/>
</dbReference>
<dbReference type="FunCoup" id="P76471">
    <property type="interactions" value="16"/>
</dbReference>
<dbReference type="STRING" id="511145.b2250"/>
<dbReference type="PaxDb" id="511145-b2250"/>
<dbReference type="EnsemblBacteria" id="AAC75310">
    <property type="protein sequence ID" value="AAC75310"/>
    <property type="gene ID" value="b2250"/>
</dbReference>
<dbReference type="GeneID" id="946739"/>
<dbReference type="KEGG" id="ecj:JW5371"/>
<dbReference type="KEGG" id="eco:b2250"/>
<dbReference type="KEGG" id="ecoc:C3026_12570"/>
<dbReference type="PATRIC" id="fig|511145.12.peg.2341"/>
<dbReference type="EchoBASE" id="EB3841"/>
<dbReference type="eggNOG" id="ENOG5030AVP">
    <property type="taxonomic scope" value="Bacteria"/>
</dbReference>
<dbReference type="HOGENOM" id="CLU_128134_1_0_6"/>
<dbReference type="InParanoid" id="P76471"/>
<dbReference type="OMA" id="DHYVEAR"/>
<dbReference type="OrthoDB" id="6506259at2"/>
<dbReference type="BioCyc" id="EcoCyc:G7163-MONOMER"/>
<dbReference type="PRO" id="PR:P76471"/>
<dbReference type="Proteomes" id="UP000000625">
    <property type="component" value="Chromosome"/>
</dbReference>
<dbReference type="GO" id="GO:0009279">
    <property type="term" value="C:cell outer membrane"/>
    <property type="evidence" value="ECO:0000314"/>
    <property type="project" value="EcoCyc"/>
</dbReference>
<dbReference type="Gene3D" id="2.40.160.10">
    <property type="entry name" value="Porin"/>
    <property type="match status" value="1"/>
</dbReference>
<dbReference type="InterPro" id="IPR011250">
    <property type="entry name" value="OMP/PagP_b-brl"/>
</dbReference>
<dbReference type="InterPro" id="IPR023614">
    <property type="entry name" value="Porin_dom_sf"/>
</dbReference>
<dbReference type="InterPro" id="IPR009998">
    <property type="entry name" value="YfaZ"/>
</dbReference>
<dbReference type="Pfam" id="PF07437">
    <property type="entry name" value="YfaZ"/>
    <property type="match status" value="1"/>
</dbReference>
<dbReference type="SUPFAM" id="SSF56925">
    <property type="entry name" value="OMPA-like"/>
    <property type="match status" value="1"/>
</dbReference>
<reference key="1">
    <citation type="journal article" date="1997" name="Science">
        <title>The complete genome sequence of Escherichia coli K-12.</title>
        <authorList>
            <person name="Blattner F.R."/>
            <person name="Plunkett G. III"/>
            <person name="Bloch C.A."/>
            <person name="Perna N.T."/>
            <person name="Burland V."/>
            <person name="Riley M."/>
            <person name="Collado-Vides J."/>
            <person name="Glasner J.D."/>
            <person name="Rode C.K."/>
            <person name="Mayhew G.F."/>
            <person name="Gregor J."/>
            <person name="Davis N.W."/>
            <person name="Kirkpatrick H.A."/>
            <person name="Goeden M.A."/>
            <person name="Rose D.J."/>
            <person name="Mau B."/>
            <person name="Shao Y."/>
        </authorList>
    </citation>
    <scope>NUCLEOTIDE SEQUENCE [LARGE SCALE GENOMIC DNA]</scope>
    <source>
        <strain>K12 / MG1655 / ATCC 47076</strain>
    </source>
</reference>
<reference key="2">
    <citation type="journal article" date="2006" name="Mol. Syst. Biol.">
        <title>Highly accurate genome sequences of Escherichia coli K-12 strains MG1655 and W3110.</title>
        <authorList>
            <person name="Hayashi K."/>
            <person name="Morooka N."/>
            <person name="Yamamoto Y."/>
            <person name="Fujita K."/>
            <person name="Isono K."/>
            <person name="Choi S."/>
            <person name="Ohtsubo E."/>
            <person name="Baba T."/>
            <person name="Wanner B.L."/>
            <person name="Mori H."/>
            <person name="Horiuchi T."/>
        </authorList>
    </citation>
    <scope>NUCLEOTIDE SEQUENCE [LARGE SCALE GENOMIC DNA]</scope>
    <source>
        <strain>K12 / W3110 / ATCC 27325 / DSM 5911</strain>
    </source>
</reference>
<reference key="3">
    <citation type="journal article" date="2006" name="Protein Sci.">
        <title>New Escherichia coli outer membrane proteins identified through prediction and experimental verification.</title>
        <authorList>
            <person name="Marani P."/>
            <person name="Wagner S."/>
            <person name="Baars L."/>
            <person name="Genevaux P."/>
            <person name="de Gier J.W."/>
            <person name="Nilsson I."/>
            <person name="Casadio R."/>
            <person name="von Heijne G."/>
        </authorList>
    </citation>
    <scope>SUBCELLULAR LOCATION</scope>
    <source>
        <strain>K12 / MG1655 / ATCC 47076</strain>
    </source>
</reference>
<proteinExistence type="inferred from homology"/>
<sequence>MKKIALAGLAGMLLVSASVNAMSISGQAGKEYTNIGVGFGTETTGLALSGNWTHNDDDGDVAGVGLGLNLPLGPLMATVGGKGVYTNPNYGDEGYAAAVGGGLQWKIGNSFRLFGEYYYSPDSLSSGIQSYEEANAGARYTIMRPVSIEAGYRYLNLSGKDGNRDNAVADGPYVGVNASF</sequence>
<organism>
    <name type="scientific">Escherichia coli (strain K12)</name>
    <dbReference type="NCBI Taxonomy" id="83333"/>
    <lineage>
        <taxon>Bacteria</taxon>
        <taxon>Pseudomonadati</taxon>
        <taxon>Pseudomonadota</taxon>
        <taxon>Gammaproteobacteria</taxon>
        <taxon>Enterobacterales</taxon>
        <taxon>Enterobacteriaceae</taxon>
        <taxon>Escherichia</taxon>
    </lineage>
</organism>
<gene>
    <name type="primary">yfaZ</name>
    <name type="ordered locus">b2250</name>
    <name type="ordered locus">JW5371</name>
</gene>